<organism>
    <name type="scientific">Buchnera aphidicola subsp. Acyrthosiphon pisum (strain 5A)</name>
    <dbReference type="NCBI Taxonomy" id="563178"/>
    <lineage>
        <taxon>Bacteria</taxon>
        <taxon>Pseudomonadati</taxon>
        <taxon>Pseudomonadota</taxon>
        <taxon>Gammaproteobacteria</taxon>
        <taxon>Enterobacterales</taxon>
        <taxon>Erwiniaceae</taxon>
        <taxon>Buchnera</taxon>
    </lineage>
</organism>
<comment type="function">
    <text evidence="1">This enzyme is involved in nucleotide metabolism: it produces dUMP, the immediate precursor of thymidine nucleotides and it decreases the intracellular concentration of dUTP so that uracil cannot be incorporated into DNA.</text>
</comment>
<comment type="catalytic activity">
    <reaction evidence="1">
        <text>dUTP + H2O = dUMP + diphosphate + H(+)</text>
        <dbReference type="Rhea" id="RHEA:10248"/>
        <dbReference type="ChEBI" id="CHEBI:15377"/>
        <dbReference type="ChEBI" id="CHEBI:15378"/>
        <dbReference type="ChEBI" id="CHEBI:33019"/>
        <dbReference type="ChEBI" id="CHEBI:61555"/>
        <dbReference type="ChEBI" id="CHEBI:246422"/>
        <dbReference type="EC" id="3.6.1.23"/>
    </reaction>
</comment>
<comment type="cofactor">
    <cofactor evidence="1">
        <name>Mg(2+)</name>
        <dbReference type="ChEBI" id="CHEBI:18420"/>
    </cofactor>
</comment>
<comment type="pathway">
    <text evidence="1">Pyrimidine metabolism; dUMP biosynthesis; dUMP from dCTP (dUTP route): step 2/2.</text>
</comment>
<comment type="similarity">
    <text evidence="1">Belongs to the dUTPase family.</text>
</comment>
<feature type="chain" id="PRO_1000119228" description="Deoxyuridine 5'-triphosphate nucleotidohydrolase">
    <location>
        <begin position="1"/>
        <end position="154"/>
    </location>
</feature>
<feature type="binding site" evidence="1">
    <location>
        <begin position="70"/>
        <end position="72"/>
    </location>
    <ligand>
        <name>substrate</name>
    </ligand>
</feature>
<feature type="binding site" evidence="1">
    <location>
        <position position="83"/>
    </location>
    <ligand>
        <name>substrate</name>
    </ligand>
</feature>
<feature type="binding site" evidence="1">
    <location>
        <begin position="87"/>
        <end position="89"/>
    </location>
    <ligand>
        <name>substrate</name>
    </ligand>
</feature>
<feature type="binding site" evidence="1">
    <location>
        <position position="97"/>
    </location>
    <ligand>
        <name>substrate</name>
    </ligand>
</feature>
<sequence>MSNIEIKILDSRMKNNFSLPSYATLGSSGLDLRACLDETVKLKAHKTILIPTGIAIYIANPNITALILPRSGLGHKKGIVLGNLVGLIDSDYQGQLMISLWNRSDQDFYVNPHDRVAQIIFVPIIRPCFLLVKNFNETSRSKKGFGHSGVSGVI</sequence>
<evidence type="ECO:0000255" key="1">
    <source>
        <dbReference type="HAMAP-Rule" id="MF_00116"/>
    </source>
</evidence>
<keyword id="KW-0378">Hydrolase</keyword>
<keyword id="KW-0460">Magnesium</keyword>
<keyword id="KW-0479">Metal-binding</keyword>
<keyword id="KW-0546">Nucleotide metabolism</keyword>
<dbReference type="EC" id="3.6.1.23" evidence="1"/>
<dbReference type="EMBL" id="CP001161">
    <property type="protein sequence ID" value="ACL30900.1"/>
    <property type="molecule type" value="Genomic_DNA"/>
</dbReference>
<dbReference type="RefSeq" id="WP_009874508.1">
    <property type="nucleotide sequence ID" value="NC_011833.1"/>
</dbReference>
<dbReference type="SMR" id="B8D8C4"/>
<dbReference type="KEGG" id="bap:BUAP5A_553"/>
<dbReference type="HOGENOM" id="CLU_068508_1_1_6"/>
<dbReference type="OrthoDB" id="9809956at2"/>
<dbReference type="UniPathway" id="UPA00610">
    <property type="reaction ID" value="UER00666"/>
</dbReference>
<dbReference type="Proteomes" id="UP000006904">
    <property type="component" value="Chromosome"/>
</dbReference>
<dbReference type="GO" id="GO:0004170">
    <property type="term" value="F:dUTP diphosphatase activity"/>
    <property type="evidence" value="ECO:0007669"/>
    <property type="project" value="UniProtKB-UniRule"/>
</dbReference>
<dbReference type="GO" id="GO:0000287">
    <property type="term" value="F:magnesium ion binding"/>
    <property type="evidence" value="ECO:0007669"/>
    <property type="project" value="UniProtKB-UniRule"/>
</dbReference>
<dbReference type="GO" id="GO:0006226">
    <property type="term" value="P:dUMP biosynthetic process"/>
    <property type="evidence" value="ECO:0007669"/>
    <property type="project" value="UniProtKB-UniRule"/>
</dbReference>
<dbReference type="GO" id="GO:0046081">
    <property type="term" value="P:dUTP catabolic process"/>
    <property type="evidence" value="ECO:0007669"/>
    <property type="project" value="InterPro"/>
</dbReference>
<dbReference type="CDD" id="cd07557">
    <property type="entry name" value="trimeric_dUTPase"/>
    <property type="match status" value="1"/>
</dbReference>
<dbReference type="FunFam" id="2.70.40.10:FF:000002">
    <property type="entry name" value="dUTP diphosphatase"/>
    <property type="match status" value="1"/>
</dbReference>
<dbReference type="Gene3D" id="2.70.40.10">
    <property type="match status" value="1"/>
</dbReference>
<dbReference type="HAMAP" id="MF_00116">
    <property type="entry name" value="dUTPase_bact"/>
    <property type="match status" value="1"/>
</dbReference>
<dbReference type="InterPro" id="IPR008181">
    <property type="entry name" value="dUTPase"/>
</dbReference>
<dbReference type="InterPro" id="IPR029054">
    <property type="entry name" value="dUTPase-like"/>
</dbReference>
<dbReference type="InterPro" id="IPR036157">
    <property type="entry name" value="dUTPase-like_sf"/>
</dbReference>
<dbReference type="InterPro" id="IPR033704">
    <property type="entry name" value="dUTPase_trimeric"/>
</dbReference>
<dbReference type="NCBIfam" id="TIGR00576">
    <property type="entry name" value="dut"/>
    <property type="match status" value="1"/>
</dbReference>
<dbReference type="NCBIfam" id="NF001862">
    <property type="entry name" value="PRK00601.1"/>
    <property type="match status" value="1"/>
</dbReference>
<dbReference type="PANTHER" id="PTHR11241">
    <property type="entry name" value="DEOXYURIDINE 5'-TRIPHOSPHATE NUCLEOTIDOHYDROLASE"/>
    <property type="match status" value="1"/>
</dbReference>
<dbReference type="PANTHER" id="PTHR11241:SF0">
    <property type="entry name" value="DEOXYURIDINE 5'-TRIPHOSPHATE NUCLEOTIDOHYDROLASE"/>
    <property type="match status" value="1"/>
</dbReference>
<dbReference type="Pfam" id="PF00692">
    <property type="entry name" value="dUTPase"/>
    <property type="match status" value="1"/>
</dbReference>
<dbReference type="SUPFAM" id="SSF51283">
    <property type="entry name" value="dUTPase-like"/>
    <property type="match status" value="1"/>
</dbReference>
<gene>
    <name evidence="1" type="primary">dut</name>
    <name type="ordered locus">BUAP5A_553</name>
</gene>
<protein>
    <recommendedName>
        <fullName evidence="1">Deoxyuridine 5'-triphosphate nucleotidohydrolase</fullName>
        <shortName evidence="1">dUTPase</shortName>
        <ecNumber evidence="1">3.6.1.23</ecNumber>
    </recommendedName>
    <alternativeName>
        <fullName evidence="1">dUTP pyrophosphatase</fullName>
    </alternativeName>
</protein>
<accession>B8D8C4</accession>
<name>DUT_BUCA5</name>
<proteinExistence type="inferred from homology"/>
<reference key="1">
    <citation type="journal article" date="2009" name="Science">
        <title>The dynamics and time scale of ongoing genomic erosion in symbiotic bacteria.</title>
        <authorList>
            <person name="Moran N.A."/>
            <person name="McLaughlin H.J."/>
            <person name="Sorek R."/>
        </authorList>
    </citation>
    <scope>NUCLEOTIDE SEQUENCE [LARGE SCALE GENOMIC DNA]</scope>
    <source>
        <strain>5A</strain>
    </source>
</reference>